<protein>
    <recommendedName>
        <fullName evidence="1">Glutamate--cysteine ligase</fullName>
        <ecNumber evidence="1">6.3.2.2</ecNumber>
    </recommendedName>
    <alternativeName>
        <fullName evidence="1">Gamma-ECS</fullName>
        <shortName evidence="1">GCS</shortName>
    </alternativeName>
    <alternativeName>
        <fullName evidence="1">Gamma-glutamylcysteine synthetase</fullName>
    </alternativeName>
</protein>
<dbReference type="EC" id="6.3.2.2" evidence="1"/>
<dbReference type="EMBL" id="CP001120">
    <property type="protein sequence ID" value="ACF66350.1"/>
    <property type="molecule type" value="Genomic_DNA"/>
</dbReference>
<dbReference type="RefSeq" id="WP_000611821.1">
    <property type="nucleotide sequence ID" value="NC_011083.1"/>
</dbReference>
<dbReference type="SMR" id="B4TF06"/>
<dbReference type="KEGG" id="seh:SeHA_C3003"/>
<dbReference type="HOGENOM" id="CLU_020728_3_0_6"/>
<dbReference type="UniPathway" id="UPA00142">
    <property type="reaction ID" value="UER00209"/>
</dbReference>
<dbReference type="Proteomes" id="UP000001866">
    <property type="component" value="Chromosome"/>
</dbReference>
<dbReference type="GO" id="GO:0005829">
    <property type="term" value="C:cytosol"/>
    <property type="evidence" value="ECO:0007669"/>
    <property type="project" value="TreeGrafter"/>
</dbReference>
<dbReference type="GO" id="GO:0005524">
    <property type="term" value="F:ATP binding"/>
    <property type="evidence" value="ECO:0007669"/>
    <property type="project" value="UniProtKB-KW"/>
</dbReference>
<dbReference type="GO" id="GO:0004357">
    <property type="term" value="F:glutamate-cysteine ligase activity"/>
    <property type="evidence" value="ECO:0007669"/>
    <property type="project" value="UniProtKB-UniRule"/>
</dbReference>
<dbReference type="GO" id="GO:0046872">
    <property type="term" value="F:metal ion binding"/>
    <property type="evidence" value="ECO:0007669"/>
    <property type="project" value="TreeGrafter"/>
</dbReference>
<dbReference type="GO" id="GO:0006750">
    <property type="term" value="P:glutathione biosynthetic process"/>
    <property type="evidence" value="ECO:0007669"/>
    <property type="project" value="UniProtKB-UniRule"/>
</dbReference>
<dbReference type="FunFam" id="3.30.590.20:FF:000001">
    <property type="entry name" value="Glutamate--cysteine ligase"/>
    <property type="match status" value="1"/>
</dbReference>
<dbReference type="Gene3D" id="3.30.590.20">
    <property type="match status" value="1"/>
</dbReference>
<dbReference type="HAMAP" id="MF_00578">
    <property type="entry name" value="Glu_cys_ligase"/>
    <property type="match status" value="1"/>
</dbReference>
<dbReference type="InterPro" id="IPR014746">
    <property type="entry name" value="Gln_synth/guanido_kin_cat_dom"/>
</dbReference>
<dbReference type="InterPro" id="IPR007370">
    <property type="entry name" value="Glu_cys_ligase"/>
</dbReference>
<dbReference type="InterPro" id="IPR006334">
    <property type="entry name" value="Glut_cys_ligase"/>
</dbReference>
<dbReference type="NCBIfam" id="TIGR01434">
    <property type="entry name" value="glu_cys_ligase"/>
    <property type="match status" value="1"/>
</dbReference>
<dbReference type="PANTHER" id="PTHR38761">
    <property type="entry name" value="GLUTAMATE--CYSTEINE LIGASE"/>
    <property type="match status" value="1"/>
</dbReference>
<dbReference type="PANTHER" id="PTHR38761:SF1">
    <property type="entry name" value="GLUTAMATE--CYSTEINE LIGASE"/>
    <property type="match status" value="1"/>
</dbReference>
<dbReference type="Pfam" id="PF04262">
    <property type="entry name" value="Glu_cys_ligase"/>
    <property type="match status" value="1"/>
</dbReference>
<dbReference type="SUPFAM" id="SSF55931">
    <property type="entry name" value="Glutamine synthetase/guanido kinase"/>
    <property type="match status" value="1"/>
</dbReference>
<name>GSH1_SALHS</name>
<gene>
    <name evidence="1" type="primary">gshA</name>
    <name type="ordered locus">SeHA_C3003</name>
</gene>
<sequence>MIPDVSQALAWLEKHPQALKGIQRGLERETLRVNADGTLATTGHPEALGSALTHKWITTDFAEALLEFITPVDGDIQHMLTFMRDLHRYTARKLGDERMWPLSMPCYIAEGQDIELAQYGTSNTGRFKTLYREGLKNRYGALMQTISGVHYNFSLPMAFWQAKCGVTEGEAAKEKISAGYFRLIRNYYRFGWVIPYLFGASPAICSSFLQGKPTTLPFEKTDCGMYYLPYATSLRLSDLGYTNKSQSNLGITFNDLHEYVAGLKRAIKTPSEEYARIGVEKDGKRLQINSNVLQIENELYAPIRPKRVTRSGESPSDALLRGGIEYIEVRSLDINPFSPIGVDEQQVRFLDLFMVWCVLADAPEMSSDELLCTRTNWNRVILEGRKPGLTLGIGCETAQFPLPKVGKDLFRDLKRVAQTLDSIHGGEEYQKVCDELVACFDNPELTFSARILRSMIDEGIGGTGKAFGEAYRNLLREEPLEILQEEEFIAERDASVRRQQEIEAADTEPFAAWLAKHA</sequence>
<evidence type="ECO:0000255" key="1">
    <source>
        <dbReference type="HAMAP-Rule" id="MF_00578"/>
    </source>
</evidence>
<feature type="chain" id="PRO_1000129605" description="Glutamate--cysteine ligase">
    <location>
        <begin position="1"/>
        <end position="518"/>
    </location>
</feature>
<comment type="catalytic activity">
    <reaction evidence="1">
        <text>L-cysteine + L-glutamate + ATP = gamma-L-glutamyl-L-cysteine + ADP + phosphate + H(+)</text>
        <dbReference type="Rhea" id="RHEA:13285"/>
        <dbReference type="ChEBI" id="CHEBI:15378"/>
        <dbReference type="ChEBI" id="CHEBI:29985"/>
        <dbReference type="ChEBI" id="CHEBI:30616"/>
        <dbReference type="ChEBI" id="CHEBI:35235"/>
        <dbReference type="ChEBI" id="CHEBI:43474"/>
        <dbReference type="ChEBI" id="CHEBI:58173"/>
        <dbReference type="ChEBI" id="CHEBI:456216"/>
        <dbReference type="EC" id="6.3.2.2"/>
    </reaction>
</comment>
<comment type="pathway">
    <text evidence="1">Sulfur metabolism; glutathione biosynthesis; glutathione from L-cysteine and L-glutamate: step 1/2.</text>
</comment>
<comment type="similarity">
    <text evidence="1">Belongs to the glutamate--cysteine ligase type 1 family. Type 1 subfamily.</text>
</comment>
<organism>
    <name type="scientific">Salmonella heidelberg (strain SL476)</name>
    <dbReference type="NCBI Taxonomy" id="454169"/>
    <lineage>
        <taxon>Bacteria</taxon>
        <taxon>Pseudomonadati</taxon>
        <taxon>Pseudomonadota</taxon>
        <taxon>Gammaproteobacteria</taxon>
        <taxon>Enterobacterales</taxon>
        <taxon>Enterobacteriaceae</taxon>
        <taxon>Salmonella</taxon>
    </lineage>
</organism>
<reference key="1">
    <citation type="journal article" date="2011" name="J. Bacteriol.">
        <title>Comparative genomics of 28 Salmonella enterica isolates: evidence for CRISPR-mediated adaptive sublineage evolution.</title>
        <authorList>
            <person name="Fricke W.F."/>
            <person name="Mammel M.K."/>
            <person name="McDermott P.F."/>
            <person name="Tartera C."/>
            <person name="White D.G."/>
            <person name="Leclerc J.E."/>
            <person name="Ravel J."/>
            <person name="Cebula T.A."/>
        </authorList>
    </citation>
    <scope>NUCLEOTIDE SEQUENCE [LARGE SCALE GENOMIC DNA]</scope>
    <source>
        <strain>SL476</strain>
    </source>
</reference>
<keyword id="KW-0067">ATP-binding</keyword>
<keyword id="KW-0317">Glutathione biosynthesis</keyword>
<keyword id="KW-0436">Ligase</keyword>
<keyword id="KW-0547">Nucleotide-binding</keyword>
<accession>B4TF06</accession>
<proteinExistence type="inferred from homology"/>